<accession>Q0AJP9</accession>
<evidence type="ECO:0000255" key="1">
    <source>
        <dbReference type="HAMAP-Rule" id="MF_00211"/>
    </source>
</evidence>
<proteinExistence type="inferred from homology"/>
<keyword id="KW-0028">Amino-acid biosynthesis</keyword>
<keyword id="KW-0057">Aromatic amino acid biosynthesis</keyword>
<keyword id="KW-0328">Glycosyltransferase</keyword>
<keyword id="KW-0460">Magnesium</keyword>
<keyword id="KW-0479">Metal-binding</keyword>
<keyword id="KW-0808">Transferase</keyword>
<keyword id="KW-0822">Tryptophan biosynthesis</keyword>
<reference key="1">
    <citation type="journal article" date="2007" name="Environ. Microbiol.">
        <title>Whole-genome analysis of the ammonia-oxidizing bacterium, Nitrosomonas eutropha C91: implications for niche adaptation.</title>
        <authorList>
            <person name="Stein L.Y."/>
            <person name="Arp D.J."/>
            <person name="Berube P.M."/>
            <person name="Chain P.S."/>
            <person name="Hauser L."/>
            <person name="Jetten M.S."/>
            <person name="Klotz M.G."/>
            <person name="Larimer F.W."/>
            <person name="Norton J.M."/>
            <person name="Op den Camp H.J.M."/>
            <person name="Shin M."/>
            <person name="Wei X."/>
        </authorList>
    </citation>
    <scope>NUCLEOTIDE SEQUENCE [LARGE SCALE GENOMIC DNA]</scope>
    <source>
        <strain>DSM 101675 / C91 / Nm57</strain>
    </source>
</reference>
<feature type="chain" id="PRO_1000043039" description="Anthranilate phosphoribosyltransferase">
    <location>
        <begin position="1"/>
        <end position="341"/>
    </location>
</feature>
<feature type="binding site" evidence="1">
    <location>
        <position position="82"/>
    </location>
    <ligand>
        <name>5-phospho-alpha-D-ribose 1-diphosphate</name>
        <dbReference type="ChEBI" id="CHEBI:58017"/>
    </ligand>
</feature>
<feature type="binding site" evidence="1">
    <location>
        <position position="82"/>
    </location>
    <ligand>
        <name>anthranilate</name>
        <dbReference type="ChEBI" id="CHEBI:16567"/>
        <label>1</label>
    </ligand>
</feature>
<feature type="binding site" evidence="1">
    <location>
        <begin position="85"/>
        <end position="86"/>
    </location>
    <ligand>
        <name>5-phospho-alpha-D-ribose 1-diphosphate</name>
        <dbReference type="ChEBI" id="CHEBI:58017"/>
    </ligand>
</feature>
<feature type="binding site" evidence="1">
    <location>
        <position position="90"/>
    </location>
    <ligand>
        <name>5-phospho-alpha-D-ribose 1-diphosphate</name>
        <dbReference type="ChEBI" id="CHEBI:58017"/>
    </ligand>
</feature>
<feature type="binding site" evidence="1">
    <location>
        <begin position="92"/>
        <end position="95"/>
    </location>
    <ligand>
        <name>5-phospho-alpha-D-ribose 1-diphosphate</name>
        <dbReference type="ChEBI" id="CHEBI:58017"/>
    </ligand>
</feature>
<feature type="binding site" evidence="1">
    <location>
        <position position="94"/>
    </location>
    <ligand>
        <name>Mg(2+)</name>
        <dbReference type="ChEBI" id="CHEBI:18420"/>
        <label>1</label>
    </ligand>
</feature>
<feature type="binding site" evidence="1">
    <location>
        <begin position="110"/>
        <end position="118"/>
    </location>
    <ligand>
        <name>5-phospho-alpha-D-ribose 1-diphosphate</name>
        <dbReference type="ChEBI" id="CHEBI:58017"/>
    </ligand>
</feature>
<feature type="binding site" evidence="1">
    <location>
        <position position="122"/>
    </location>
    <ligand>
        <name>5-phospho-alpha-D-ribose 1-diphosphate</name>
        <dbReference type="ChEBI" id="CHEBI:58017"/>
    </ligand>
</feature>
<feature type="binding site" evidence="1">
    <location>
        <position position="168"/>
    </location>
    <ligand>
        <name>anthranilate</name>
        <dbReference type="ChEBI" id="CHEBI:16567"/>
        <label>2</label>
    </ligand>
</feature>
<feature type="binding site" evidence="1">
    <location>
        <position position="227"/>
    </location>
    <ligand>
        <name>Mg(2+)</name>
        <dbReference type="ChEBI" id="CHEBI:18420"/>
        <label>2</label>
    </ligand>
</feature>
<feature type="binding site" evidence="1">
    <location>
        <position position="228"/>
    </location>
    <ligand>
        <name>Mg(2+)</name>
        <dbReference type="ChEBI" id="CHEBI:18420"/>
        <label>1</label>
    </ligand>
</feature>
<feature type="binding site" evidence="1">
    <location>
        <position position="228"/>
    </location>
    <ligand>
        <name>Mg(2+)</name>
        <dbReference type="ChEBI" id="CHEBI:18420"/>
        <label>2</label>
    </ligand>
</feature>
<sequence length="341" mass="36237">MKPQAILARILEQRETPYEEMVELMRAIMSGNVSPAMTAALMTGLRMKRESIGEITAAAQVMRELALHIEVADSVNLVDTCGTGGDGCNTFNISTASAFVAAAADAQVAKHGGRSVSSKAGSADVLEAIGIHLNQTPDQIAQSITEVGIGFMFAPNFHHAMKHAAPVRRELGVRTLFNILGPLTNPAGAKNQLLGVFNEDLTGILAQALLRLGSQHAMIVHGSDGLDEITISGPTKIAELKEGEIREYTVQPEDFGLERTAIESLQVNSTDDARVMLLSVLDNHPGPARDIVLLNAGAAIYVAGKADSWAEGVEIARDKLASGAAKEKMLALIKFSNQLTH</sequence>
<dbReference type="EC" id="2.4.2.18" evidence="1"/>
<dbReference type="EMBL" id="CP000450">
    <property type="protein sequence ID" value="ABI58422.1"/>
    <property type="molecule type" value="Genomic_DNA"/>
</dbReference>
<dbReference type="RefSeq" id="WP_011633267.1">
    <property type="nucleotide sequence ID" value="NC_008344.1"/>
</dbReference>
<dbReference type="SMR" id="Q0AJP9"/>
<dbReference type="STRING" id="335283.Neut_0134"/>
<dbReference type="KEGG" id="net:Neut_0134"/>
<dbReference type="eggNOG" id="COG0547">
    <property type="taxonomic scope" value="Bacteria"/>
</dbReference>
<dbReference type="HOGENOM" id="CLU_034315_2_1_4"/>
<dbReference type="OrthoDB" id="9806430at2"/>
<dbReference type="UniPathway" id="UPA00035">
    <property type="reaction ID" value="UER00041"/>
</dbReference>
<dbReference type="Proteomes" id="UP000001966">
    <property type="component" value="Chromosome"/>
</dbReference>
<dbReference type="GO" id="GO:0005829">
    <property type="term" value="C:cytosol"/>
    <property type="evidence" value="ECO:0007669"/>
    <property type="project" value="TreeGrafter"/>
</dbReference>
<dbReference type="GO" id="GO:0004048">
    <property type="term" value="F:anthranilate phosphoribosyltransferase activity"/>
    <property type="evidence" value="ECO:0007669"/>
    <property type="project" value="UniProtKB-UniRule"/>
</dbReference>
<dbReference type="GO" id="GO:0000287">
    <property type="term" value="F:magnesium ion binding"/>
    <property type="evidence" value="ECO:0007669"/>
    <property type="project" value="UniProtKB-UniRule"/>
</dbReference>
<dbReference type="GO" id="GO:0000162">
    <property type="term" value="P:L-tryptophan biosynthetic process"/>
    <property type="evidence" value="ECO:0007669"/>
    <property type="project" value="UniProtKB-UniRule"/>
</dbReference>
<dbReference type="FunFam" id="3.40.1030.10:FF:000002">
    <property type="entry name" value="Anthranilate phosphoribosyltransferase"/>
    <property type="match status" value="1"/>
</dbReference>
<dbReference type="Gene3D" id="3.40.1030.10">
    <property type="entry name" value="Nucleoside phosphorylase/phosphoribosyltransferase catalytic domain"/>
    <property type="match status" value="1"/>
</dbReference>
<dbReference type="Gene3D" id="1.20.970.10">
    <property type="entry name" value="Transferase, Pyrimidine Nucleoside Phosphorylase, Chain C"/>
    <property type="match status" value="1"/>
</dbReference>
<dbReference type="HAMAP" id="MF_00211">
    <property type="entry name" value="TrpD"/>
    <property type="match status" value="1"/>
</dbReference>
<dbReference type="InterPro" id="IPR005940">
    <property type="entry name" value="Anthranilate_Pribosyl_Tfrase"/>
</dbReference>
<dbReference type="InterPro" id="IPR000312">
    <property type="entry name" value="Glycosyl_Trfase_fam3"/>
</dbReference>
<dbReference type="InterPro" id="IPR017459">
    <property type="entry name" value="Glycosyl_Trfase_fam3_N_dom"/>
</dbReference>
<dbReference type="InterPro" id="IPR036320">
    <property type="entry name" value="Glycosyl_Trfase_fam3_N_dom_sf"/>
</dbReference>
<dbReference type="InterPro" id="IPR035902">
    <property type="entry name" value="Nuc_phospho_transferase"/>
</dbReference>
<dbReference type="NCBIfam" id="TIGR01245">
    <property type="entry name" value="trpD"/>
    <property type="match status" value="1"/>
</dbReference>
<dbReference type="PANTHER" id="PTHR43285">
    <property type="entry name" value="ANTHRANILATE PHOSPHORIBOSYLTRANSFERASE"/>
    <property type="match status" value="1"/>
</dbReference>
<dbReference type="PANTHER" id="PTHR43285:SF2">
    <property type="entry name" value="ANTHRANILATE PHOSPHORIBOSYLTRANSFERASE"/>
    <property type="match status" value="1"/>
</dbReference>
<dbReference type="Pfam" id="PF02885">
    <property type="entry name" value="Glycos_trans_3N"/>
    <property type="match status" value="1"/>
</dbReference>
<dbReference type="Pfam" id="PF00591">
    <property type="entry name" value="Glycos_transf_3"/>
    <property type="match status" value="1"/>
</dbReference>
<dbReference type="SUPFAM" id="SSF52418">
    <property type="entry name" value="Nucleoside phosphorylase/phosphoribosyltransferase catalytic domain"/>
    <property type="match status" value="1"/>
</dbReference>
<dbReference type="SUPFAM" id="SSF47648">
    <property type="entry name" value="Nucleoside phosphorylase/phosphoribosyltransferase N-terminal domain"/>
    <property type="match status" value="1"/>
</dbReference>
<name>TRPD_NITEC</name>
<gene>
    <name evidence="1" type="primary">trpD</name>
    <name type="ordered locus">Neut_0134</name>
</gene>
<organism>
    <name type="scientific">Nitrosomonas eutropha (strain DSM 101675 / C91 / Nm57)</name>
    <dbReference type="NCBI Taxonomy" id="335283"/>
    <lineage>
        <taxon>Bacteria</taxon>
        <taxon>Pseudomonadati</taxon>
        <taxon>Pseudomonadota</taxon>
        <taxon>Betaproteobacteria</taxon>
        <taxon>Nitrosomonadales</taxon>
        <taxon>Nitrosomonadaceae</taxon>
        <taxon>Nitrosomonas</taxon>
    </lineage>
</organism>
<protein>
    <recommendedName>
        <fullName evidence="1">Anthranilate phosphoribosyltransferase</fullName>
        <ecNumber evidence="1">2.4.2.18</ecNumber>
    </recommendedName>
</protein>
<comment type="function">
    <text evidence="1">Catalyzes the transfer of the phosphoribosyl group of 5-phosphorylribose-1-pyrophosphate (PRPP) to anthranilate to yield N-(5'-phosphoribosyl)-anthranilate (PRA).</text>
</comment>
<comment type="catalytic activity">
    <reaction evidence="1">
        <text>N-(5-phospho-beta-D-ribosyl)anthranilate + diphosphate = 5-phospho-alpha-D-ribose 1-diphosphate + anthranilate</text>
        <dbReference type="Rhea" id="RHEA:11768"/>
        <dbReference type="ChEBI" id="CHEBI:16567"/>
        <dbReference type="ChEBI" id="CHEBI:18277"/>
        <dbReference type="ChEBI" id="CHEBI:33019"/>
        <dbReference type="ChEBI" id="CHEBI:58017"/>
        <dbReference type="EC" id="2.4.2.18"/>
    </reaction>
</comment>
<comment type="cofactor">
    <cofactor evidence="1">
        <name>Mg(2+)</name>
        <dbReference type="ChEBI" id="CHEBI:18420"/>
    </cofactor>
    <text evidence="1">Binds 2 magnesium ions per monomer.</text>
</comment>
<comment type="pathway">
    <text evidence="1">Amino-acid biosynthesis; L-tryptophan biosynthesis; L-tryptophan from chorismate: step 2/5.</text>
</comment>
<comment type="subunit">
    <text evidence="1">Homodimer.</text>
</comment>
<comment type="similarity">
    <text evidence="1">Belongs to the anthranilate phosphoribosyltransferase family.</text>
</comment>